<evidence type="ECO:0000255" key="1">
    <source>
        <dbReference type="HAMAP-Rule" id="MF_00110"/>
    </source>
</evidence>
<protein>
    <recommendedName>
        <fullName evidence="1">3-dehydroquinate synthase</fullName>
        <shortName evidence="1">DHQS</shortName>
        <ecNumber evidence="1">4.2.3.4</ecNumber>
    </recommendedName>
</protein>
<accession>Q1R5P8</accession>
<dbReference type="EC" id="4.2.3.4" evidence="1"/>
<dbReference type="EMBL" id="CP000243">
    <property type="protein sequence ID" value="ABE09316.1"/>
    <property type="molecule type" value="Genomic_DNA"/>
</dbReference>
<dbReference type="RefSeq" id="WP_000439850.1">
    <property type="nucleotide sequence ID" value="NZ_CP064825.1"/>
</dbReference>
<dbReference type="SMR" id="Q1R5P8"/>
<dbReference type="KEGG" id="eci:UTI89_C3887"/>
<dbReference type="HOGENOM" id="CLU_001201_0_2_6"/>
<dbReference type="UniPathway" id="UPA00053">
    <property type="reaction ID" value="UER00085"/>
</dbReference>
<dbReference type="Proteomes" id="UP000001952">
    <property type="component" value="Chromosome"/>
</dbReference>
<dbReference type="GO" id="GO:0005737">
    <property type="term" value="C:cytoplasm"/>
    <property type="evidence" value="ECO:0007669"/>
    <property type="project" value="UniProtKB-SubCell"/>
</dbReference>
<dbReference type="GO" id="GO:0003856">
    <property type="term" value="F:3-dehydroquinate synthase activity"/>
    <property type="evidence" value="ECO:0007669"/>
    <property type="project" value="UniProtKB-UniRule"/>
</dbReference>
<dbReference type="GO" id="GO:0046872">
    <property type="term" value="F:metal ion binding"/>
    <property type="evidence" value="ECO:0007669"/>
    <property type="project" value="UniProtKB-KW"/>
</dbReference>
<dbReference type="GO" id="GO:0000166">
    <property type="term" value="F:nucleotide binding"/>
    <property type="evidence" value="ECO:0007669"/>
    <property type="project" value="UniProtKB-KW"/>
</dbReference>
<dbReference type="GO" id="GO:0008652">
    <property type="term" value="P:amino acid biosynthetic process"/>
    <property type="evidence" value="ECO:0007669"/>
    <property type="project" value="UniProtKB-KW"/>
</dbReference>
<dbReference type="GO" id="GO:0009073">
    <property type="term" value="P:aromatic amino acid family biosynthetic process"/>
    <property type="evidence" value="ECO:0007669"/>
    <property type="project" value="UniProtKB-KW"/>
</dbReference>
<dbReference type="GO" id="GO:0009423">
    <property type="term" value="P:chorismate biosynthetic process"/>
    <property type="evidence" value="ECO:0007669"/>
    <property type="project" value="UniProtKB-UniRule"/>
</dbReference>
<dbReference type="CDD" id="cd08195">
    <property type="entry name" value="DHQS"/>
    <property type="match status" value="1"/>
</dbReference>
<dbReference type="FunFam" id="1.20.1090.10:FF:000002">
    <property type="entry name" value="3-dehydroquinate synthase"/>
    <property type="match status" value="1"/>
</dbReference>
<dbReference type="FunFam" id="3.40.50.1970:FF:000001">
    <property type="entry name" value="3-dehydroquinate synthase"/>
    <property type="match status" value="1"/>
</dbReference>
<dbReference type="Gene3D" id="3.40.50.1970">
    <property type="match status" value="1"/>
</dbReference>
<dbReference type="Gene3D" id="1.20.1090.10">
    <property type="entry name" value="Dehydroquinate synthase-like - alpha domain"/>
    <property type="match status" value="1"/>
</dbReference>
<dbReference type="HAMAP" id="MF_00110">
    <property type="entry name" value="DHQ_synthase"/>
    <property type="match status" value="1"/>
</dbReference>
<dbReference type="InterPro" id="IPR050071">
    <property type="entry name" value="Dehydroquinate_synthase"/>
</dbReference>
<dbReference type="InterPro" id="IPR016037">
    <property type="entry name" value="DHQ_synth_AroB"/>
</dbReference>
<dbReference type="InterPro" id="IPR030963">
    <property type="entry name" value="DHQ_synth_fam"/>
</dbReference>
<dbReference type="InterPro" id="IPR030960">
    <property type="entry name" value="DHQS/DOIS_N"/>
</dbReference>
<dbReference type="InterPro" id="IPR056179">
    <property type="entry name" value="DHQS_C"/>
</dbReference>
<dbReference type="NCBIfam" id="TIGR01357">
    <property type="entry name" value="aroB"/>
    <property type="match status" value="1"/>
</dbReference>
<dbReference type="PANTHER" id="PTHR43622">
    <property type="entry name" value="3-DEHYDROQUINATE SYNTHASE"/>
    <property type="match status" value="1"/>
</dbReference>
<dbReference type="PANTHER" id="PTHR43622:SF7">
    <property type="entry name" value="3-DEHYDROQUINATE SYNTHASE, CHLOROPLASTIC"/>
    <property type="match status" value="1"/>
</dbReference>
<dbReference type="Pfam" id="PF01761">
    <property type="entry name" value="DHQ_synthase"/>
    <property type="match status" value="1"/>
</dbReference>
<dbReference type="Pfam" id="PF24621">
    <property type="entry name" value="DHQS_C"/>
    <property type="match status" value="1"/>
</dbReference>
<dbReference type="PIRSF" id="PIRSF001455">
    <property type="entry name" value="DHQ_synth"/>
    <property type="match status" value="1"/>
</dbReference>
<dbReference type="SUPFAM" id="SSF56796">
    <property type="entry name" value="Dehydroquinate synthase-like"/>
    <property type="match status" value="1"/>
</dbReference>
<sequence length="362" mass="38854">MERIVVTLGERSYPITIASGLFNEPASFLPLKSGEQVMLVTNETLAPLYLDKVRGVLEQAGVNVDSVILPDGEQYKSLAVLDTVFTALLQKPHGRDTTLVALGGGVVGDLTGFAAASYQRGVRFIQVPTTLLSQVDSSVGGKTAVNHPLGKNMIGAFYQPASVVVDLDCLKTLPPRELASGLAEVIKYGIILDGAFFNWLEENLDALLRLDGPAMAYCIRRCCELKAEVVAADERETGLRALLNLGHTFGHAIEAEMGYGNWLHGEAVAAGMVMAARTSERLGQFSSAETQRIITLLTRAGLPVNGPREMSAQAYLPHMLRDKKVLAGEMRLILPLAIGKSEVRSGVSHELVLNAIADCQSA</sequence>
<name>AROB_ECOUT</name>
<keyword id="KW-0028">Amino-acid biosynthesis</keyword>
<keyword id="KW-0057">Aromatic amino acid biosynthesis</keyword>
<keyword id="KW-0170">Cobalt</keyword>
<keyword id="KW-0963">Cytoplasm</keyword>
<keyword id="KW-0456">Lyase</keyword>
<keyword id="KW-0479">Metal-binding</keyword>
<keyword id="KW-0520">NAD</keyword>
<keyword id="KW-0547">Nucleotide-binding</keyword>
<keyword id="KW-0862">Zinc</keyword>
<organism>
    <name type="scientific">Escherichia coli (strain UTI89 / UPEC)</name>
    <dbReference type="NCBI Taxonomy" id="364106"/>
    <lineage>
        <taxon>Bacteria</taxon>
        <taxon>Pseudomonadati</taxon>
        <taxon>Pseudomonadota</taxon>
        <taxon>Gammaproteobacteria</taxon>
        <taxon>Enterobacterales</taxon>
        <taxon>Enterobacteriaceae</taxon>
        <taxon>Escherichia</taxon>
    </lineage>
</organism>
<proteinExistence type="inferred from homology"/>
<gene>
    <name evidence="1" type="primary">aroB</name>
    <name type="ordered locus">UTI89_C3887</name>
</gene>
<feature type="chain" id="PRO_1000094513" description="3-dehydroquinate synthase">
    <location>
        <begin position="1"/>
        <end position="362"/>
    </location>
</feature>
<feature type="binding site" evidence="1">
    <location>
        <begin position="71"/>
        <end position="76"/>
    </location>
    <ligand>
        <name>NAD(+)</name>
        <dbReference type="ChEBI" id="CHEBI:57540"/>
    </ligand>
</feature>
<feature type="binding site" evidence="1">
    <location>
        <begin position="105"/>
        <end position="109"/>
    </location>
    <ligand>
        <name>NAD(+)</name>
        <dbReference type="ChEBI" id="CHEBI:57540"/>
    </ligand>
</feature>
<feature type="binding site" evidence="1">
    <location>
        <begin position="129"/>
        <end position="130"/>
    </location>
    <ligand>
        <name>NAD(+)</name>
        <dbReference type="ChEBI" id="CHEBI:57540"/>
    </ligand>
</feature>
<feature type="binding site" evidence="1">
    <location>
        <position position="142"/>
    </location>
    <ligand>
        <name>NAD(+)</name>
        <dbReference type="ChEBI" id="CHEBI:57540"/>
    </ligand>
</feature>
<feature type="binding site" evidence="1">
    <location>
        <position position="151"/>
    </location>
    <ligand>
        <name>NAD(+)</name>
        <dbReference type="ChEBI" id="CHEBI:57540"/>
    </ligand>
</feature>
<feature type="binding site" evidence="1">
    <location>
        <begin position="169"/>
        <end position="172"/>
    </location>
    <ligand>
        <name>NAD(+)</name>
        <dbReference type="ChEBI" id="CHEBI:57540"/>
    </ligand>
</feature>
<feature type="binding site" evidence="1">
    <location>
        <position position="184"/>
    </location>
    <ligand>
        <name>Zn(2+)</name>
        <dbReference type="ChEBI" id="CHEBI:29105"/>
    </ligand>
</feature>
<feature type="binding site" evidence="1">
    <location>
        <position position="247"/>
    </location>
    <ligand>
        <name>Zn(2+)</name>
        <dbReference type="ChEBI" id="CHEBI:29105"/>
    </ligand>
</feature>
<feature type="binding site" evidence="1">
    <location>
        <position position="264"/>
    </location>
    <ligand>
        <name>Zn(2+)</name>
        <dbReference type="ChEBI" id="CHEBI:29105"/>
    </ligand>
</feature>
<reference key="1">
    <citation type="journal article" date="2006" name="Proc. Natl. Acad. Sci. U.S.A.">
        <title>Identification of genes subject to positive selection in uropathogenic strains of Escherichia coli: a comparative genomics approach.</title>
        <authorList>
            <person name="Chen S.L."/>
            <person name="Hung C.-S."/>
            <person name="Xu J."/>
            <person name="Reigstad C.S."/>
            <person name="Magrini V."/>
            <person name="Sabo A."/>
            <person name="Blasiar D."/>
            <person name="Bieri T."/>
            <person name="Meyer R.R."/>
            <person name="Ozersky P."/>
            <person name="Armstrong J.R."/>
            <person name="Fulton R.S."/>
            <person name="Latreille J.P."/>
            <person name="Spieth J."/>
            <person name="Hooton T.M."/>
            <person name="Mardis E.R."/>
            <person name="Hultgren S.J."/>
            <person name="Gordon J.I."/>
        </authorList>
    </citation>
    <scope>NUCLEOTIDE SEQUENCE [LARGE SCALE GENOMIC DNA]</scope>
    <source>
        <strain>UTI89 / UPEC</strain>
    </source>
</reference>
<comment type="function">
    <text evidence="1">Catalyzes the conversion of 3-deoxy-D-arabino-heptulosonate 7-phosphate (DAHP) to dehydroquinate (DHQ).</text>
</comment>
<comment type="catalytic activity">
    <reaction evidence="1">
        <text>7-phospho-2-dehydro-3-deoxy-D-arabino-heptonate = 3-dehydroquinate + phosphate</text>
        <dbReference type="Rhea" id="RHEA:21968"/>
        <dbReference type="ChEBI" id="CHEBI:32364"/>
        <dbReference type="ChEBI" id="CHEBI:43474"/>
        <dbReference type="ChEBI" id="CHEBI:58394"/>
        <dbReference type="EC" id="4.2.3.4"/>
    </reaction>
</comment>
<comment type="cofactor">
    <cofactor evidence="1">
        <name>Co(2+)</name>
        <dbReference type="ChEBI" id="CHEBI:48828"/>
    </cofactor>
    <cofactor evidence="1">
        <name>Zn(2+)</name>
        <dbReference type="ChEBI" id="CHEBI:29105"/>
    </cofactor>
    <text evidence="1">Binds 1 divalent metal cation per subunit. Can use either Co(2+) or Zn(2+).</text>
</comment>
<comment type="cofactor">
    <cofactor evidence="1">
        <name>NAD(+)</name>
        <dbReference type="ChEBI" id="CHEBI:57540"/>
    </cofactor>
</comment>
<comment type="pathway">
    <text evidence="1">Metabolic intermediate biosynthesis; chorismate biosynthesis; chorismate from D-erythrose 4-phosphate and phosphoenolpyruvate: step 2/7.</text>
</comment>
<comment type="subcellular location">
    <subcellularLocation>
        <location evidence="1">Cytoplasm</location>
    </subcellularLocation>
</comment>
<comment type="similarity">
    <text evidence="1">Belongs to the sugar phosphate cyclases superfamily. Dehydroquinate synthase family.</text>
</comment>